<feature type="chain" id="PRO_0000257512" description="Putative pre-16S rRNA nuclease">
    <location>
        <begin position="1"/>
        <end position="146"/>
    </location>
</feature>
<keyword id="KW-0963">Cytoplasm</keyword>
<keyword id="KW-0378">Hydrolase</keyword>
<keyword id="KW-0540">Nuclease</keyword>
<keyword id="KW-0690">Ribosome biogenesis</keyword>
<sequence>MSAALSRDATLLAFDYGEKRIGVAIGNLLTRTARALVIVPNLNREHRFKAVGELIAEWKPDALVVGLPLHPDGAPHEMTQRALRFGNQLNGRFNLPVSWVDERYSSVEARAGLRARGDAANRVDAEAARVILQQFLDGLPDQHEFN</sequence>
<evidence type="ECO:0000255" key="1">
    <source>
        <dbReference type="HAMAP-Rule" id="MF_00651"/>
    </source>
</evidence>
<gene>
    <name type="ordered locus">BTH_I1463</name>
</gene>
<reference key="1">
    <citation type="journal article" date="2005" name="BMC Genomics">
        <title>Bacterial genome adaptation to niches: divergence of the potential virulence genes in three Burkholderia species of different survival strategies.</title>
        <authorList>
            <person name="Kim H.S."/>
            <person name="Schell M.A."/>
            <person name="Yu Y."/>
            <person name="Ulrich R.L."/>
            <person name="Sarria S.H."/>
            <person name="Nierman W.C."/>
            <person name="DeShazer D."/>
        </authorList>
    </citation>
    <scope>NUCLEOTIDE SEQUENCE [LARGE SCALE GENOMIC DNA]</scope>
    <source>
        <strain>ATCC 700388 / DSM 13276 / CCUG 48851 / CIP 106301 / E264</strain>
    </source>
</reference>
<comment type="function">
    <text evidence="1">Could be a nuclease involved in processing of the 5'-end of pre-16S rRNA.</text>
</comment>
<comment type="subcellular location">
    <subcellularLocation>
        <location evidence="1">Cytoplasm</location>
    </subcellularLocation>
</comment>
<comment type="similarity">
    <text evidence="1">Belongs to the YqgF nuclease family.</text>
</comment>
<accession>Q2SYJ0</accession>
<proteinExistence type="inferred from homology"/>
<protein>
    <recommendedName>
        <fullName evidence="1">Putative pre-16S rRNA nuclease</fullName>
        <ecNumber evidence="1">3.1.-.-</ecNumber>
    </recommendedName>
</protein>
<name>YQGF_BURTA</name>
<organism>
    <name type="scientific">Burkholderia thailandensis (strain ATCC 700388 / DSM 13276 / CCUG 48851 / CIP 106301 / E264)</name>
    <dbReference type="NCBI Taxonomy" id="271848"/>
    <lineage>
        <taxon>Bacteria</taxon>
        <taxon>Pseudomonadati</taxon>
        <taxon>Pseudomonadota</taxon>
        <taxon>Betaproteobacteria</taxon>
        <taxon>Burkholderiales</taxon>
        <taxon>Burkholderiaceae</taxon>
        <taxon>Burkholderia</taxon>
        <taxon>pseudomallei group</taxon>
    </lineage>
</organism>
<dbReference type="EC" id="3.1.-.-" evidence="1"/>
<dbReference type="EMBL" id="CP000086">
    <property type="protein sequence ID" value="ABC36845.1"/>
    <property type="molecule type" value="Genomic_DNA"/>
</dbReference>
<dbReference type="RefSeq" id="WP_009889574.1">
    <property type="nucleotide sequence ID" value="NC_007651.1"/>
</dbReference>
<dbReference type="SMR" id="Q2SYJ0"/>
<dbReference type="GeneID" id="45121204"/>
<dbReference type="KEGG" id="bte:BTH_I1463"/>
<dbReference type="HOGENOM" id="CLU_098240_3_2_4"/>
<dbReference type="Proteomes" id="UP000001930">
    <property type="component" value="Chromosome I"/>
</dbReference>
<dbReference type="GO" id="GO:0005829">
    <property type="term" value="C:cytosol"/>
    <property type="evidence" value="ECO:0007669"/>
    <property type="project" value="TreeGrafter"/>
</dbReference>
<dbReference type="GO" id="GO:0004518">
    <property type="term" value="F:nuclease activity"/>
    <property type="evidence" value="ECO:0007669"/>
    <property type="project" value="UniProtKB-KW"/>
</dbReference>
<dbReference type="GO" id="GO:0000967">
    <property type="term" value="P:rRNA 5'-end processing"/>
    <property type="evidence" value="ECO:0007669"/>
    <property type="project" value="UniProtKB-UniRule"/>
</dbReference>
<dbReference type="CDD" id="cd16964">
    <property type="entry name" value="YqgF"/>
    <property type="match status" value="1"/>
</dbReference>
<dbReference type="Gene3D" id="3.30.420.140">
    <property type="entry name" value="YqgF/RNase H-like domain"/>
    <property type="match status" value="1"/>
</dbReference>
<dbReference type="HAMAP" id="MF_00651">
    <property type="entry name" value="Nuclease_YqgF"/>
    <property type="match status" value="1"/>
</dbReference>
<dbReference type="InterPro" id="IPR012337">
    <property type="entry name" value="RNaseH-like_sf"/>
</dbReference>
<dbReference type="InterPro" id="IPR005227">
    <property type="entry name" value="YqgF"/>
</dbReference>
<dbReference type="InterPro" id="IPR006641">
    <property type="entry name" value="YqgF/RNaseH-like_dom"/>
</dbReference>
<dbReference type="InterPro" id="IPR037027">
    <property type="entry name" value="YqgF/RNaseH-like_dom_sf"/>
</dbReference>
<dbReference type="NCBIfam" id="TIGR00250">
    <property type="entry name" value="RNAse_H_YqgF"/>
    <property type="match status" value="1"/>
</dbReference>
<dbReference type="PANTHER" id="PTHR33317">
    <property type="entry name" value="POLYNUCLEOTIDYL TRANSFERASE, RIBONUCLEASE H-LIKE SUPERFAMILY PROTEIN"/>
    <property type="match status" value="1"/>
</dbReference>
<dbReference type="PANTHER" id="PTHR33317:SF4">
    <property type="entry name" value="POLYNUCLEOTIDYL TRANSFERASE, RIBONUCLEASE H-LIKE SUPERFAMILY PROTEIN"/>
    <property type="match status" value="1"/>
</dbReference>
<dbReference type="Pfam" id="PF03652">
    <property type="entry name" value="RuvX"/>
    <property type="match status" value="1"/>
</dbReference>
<dbReference type="SMART" id="SM00732">
    <property type="entry name" value="YqgFc"/>
    <property type="match status" value="1"/>
</dbReference>
<dbReference type="SUPFAM" id="SSF53098">
    <property type="entry name" value="Ribonuclease H-like"/>
    <property type="match status" value="1"/>
</dbReference>